<protein>
    <recommendedName>
        <fullName evidence="1">DNA polymerase IV</fullName>
        <shortName evidence="1">Pol IV</shortName>
        <ecNumber evidence="1">2.7.7.7</ecNumber>
    </recommendedName>
</protein>
<comment type="function">
    <text evidence="1">Poorly processive, error-prone DNA polymerase involved in untargeted mutagenesis. Copies undamaged DNA at stalled replication forks, which arise in vivo from mismatched or misaligned primer ends. These misaligned primers can be extended by PolIV. Exhibits no 3'-5' exonuclease (proofreading) activity. May be involved in translesional synthesis, in conjunction with the beta clamp from PolIII.</text>
</comment>
<comment type="catalytic activity">
    <reaction evidence="1">
        <text>DNA(n) + a 2'-deoxyribonucleoside 5'-triphosphate = DNA(n+1) + diphosphate</text>
        <dbReference type="Rhea" id="RHEA:22508"/>
        <dbReference type="Rhea" id="RHEA-COMP:17339"/>
        <dbReference type="Rhea" id="RHEA-COMP:17340"/>
        <dbReference type="ChEBI" id="CHEBI:33019"/>
        <dbReference type="ChEBI" id="CHEBI:61560"/>
        <dbReference type="ChEBI" id="CHEBI:173112"/>
        <dbReference type="EC" id="2.7.7.7"/>
    </reaction>
</comment>
<comment type="cofactor">
    <cofactor evidence="1">
        <name>Mg(2+)</name>
        <dbReference type="ChEBI" id="CHEBI:18420"/>
    </cofactor>
    <text evidence="1">Binds 2 magnesium ions per subunit.</text>
</comment>
<comment type="subunit">
    <text evidence="1">Monomer.</text>
</comment>
<comment type="subcellular location">
    <subcellularLocation>
        <location evidence="1">Cytoplasm</location>
    </subcellularLocation>
</comment>
<comment type="similarity">
    <text evidence="1">Belongs to the DNA polymerase type-Y family.</text>
</comment>
<sequence length="356" mass="39846">MTRLRKIIHVDMDAFYASVEQRDDPSLRGKPVVVAWRGARSVVCAASYEARVFGVRSAMPAVRAERLCPDAIFVPPDFARYKAVSQQVREIFLRHTDLVEPLSLDEAYLDVTEPKSGMELATDIARTIRAQIREETQLTASAGIAPNKFLAKIASDWRKPDGQFVIPPQRVDAFLLPLPVNRVPGVGKVMEGKLAARGIVTCGDLRQWALIDLEEAFGSFGRSLYNRARGVDERPVEPDQQVQSISSEDTFAEDLPLEDLGEAIVQLAEKTWNATRKTERVGHTVVLKLKTAQFRILTRSFTPERPPESMEELRDIALALRARVDLPADTRYRLVGVGLSGFRDKEPVVQGELFEH</sequence>
<organism>
    <name type="scientific">Stenotrophomonas maltophilia (strain R551-3)</name>
    <dbReference type="NCBI Taxonomy" id="391008"/>
    <lineage>
        <taxon>Bacteria</taxon>
        <taxon>Pseudomonadati</taxon>
        <taxon>Pseudomonadota</taxon>
        <taxon>Gammaproteobacteria</taxon>
        <taxon>Lysobacterales</taxon>
        <taxon>Lysobacteraceae</taxon>
        <taxon>Stenotrophomonas</taxon>
        <taxon>Stenotrophomonas maltophilia group</taxon>
    </lineage>
</organism>
<name>DPO4_STRM5</name>
<feature type="chain" id="PRO_1000137147" description="DNA polymerase IV">
    <location>
        <begin position="1"/>
        <end position="356"/>
    </location>
</feature>
<feature type="domain" description="UmuC" evidence="1">
    <location>
        <begin position="7"/>
        <end position="187"/>
    </location>
</feature>
<feature type="active site" evidence="1">
    <location>
        <position position="106"/>
    </location>
</feature>
<feature type="binding site" evidence="1">
    <location>
        <position position="11"/>
    </location>
    <ligand>
        <name>Mg(2+)</name>
        <dbReference type="ChEBI" id="CHEBI:18420"/>
    </ligand>
</feature>
<feature type="binding site" evidence="1">
    <location>
        <position position="105"/>
    </location>
    <ligand>
        <name>Mg(2+)</name>
        <dbReference type="ChEBI" id="CHEBI:18420"/>
    </ligand>
</feature>
<feature type="site" description="Substrate discrimination" evidence="1">
    <location>
        <position position="16"/>
    </location>
</feature>
<evidence type="ECO:0000255" key="1">
    <source>
        <dbReference type="HAMAP-Rule" id="MF_01113"/>
    </source>
</evidence>
<gene>
    <name evidence="1" type="primary">dinB</name>
    <name type="ordered locus">Smal_0455</name>
</gene>
<proteinExistence type="inferred from homology"/>
<dbReference type="EC" id="2.7.7.7" evidence="1"/>
<dbReference type="EMBL" id="CP001111">
    <property type="protein sequence ID" value="ACF50160.1"/>
    <property type="molecule type" value="Genomic_DNA"/>
</dbReference>
<dbReference type="RefSeq" id="WP_012509940.1">
    <property type="nucleotide sequence ID" value="NC_011071.1"/>
</dbReference>
<dbReference type="SMR" id="B4SIF5"/>
<dbReference type="STRING" id="391008.Smal_0455"/>
<dbReference type="KEGG" id="smt:Smal_0455"/>
<dbReference type="eggNOG" id="COG0389">
    <property type="taxonomic scope" value="Bacteria"/>
</dbReference>
<dbReference type="HOGENOM" id="CLU_012348_1_2_6"/>
<dbReference type="OrthoDB" id="9808813at2"/>
<dbReference type="Proteomes" id="UP000001867">
    <property type="component" value="Chromosome"/>
</dbReference>
<dbReference type="GO" id="GO:0005829">
    <property type="term" value="C:cytosol"/>
    <property type="evidence" value="ECO:0007669"/>
    <property type="project" value="TreeGrafter"/>
</dbReference>
<dbReference type="GO" id="GO:0003684">
    <property type="term" value="F:damaged DNA binding"/>
    <property type="evidence" value="ECO:0007669"/>
    <property type="project" value="InterPro"/>
</dbReference>
<dbReference type="GO" id="GO:0003887">
    <property type="term" value="F:DNA-directed DNA polymerase activity"/>
    <property type="evidence" value="ECO:0007669"/>
    <property type="project" value="UniProtKB-UniRule"/>
</dbReference>
<dbReference type="GO" id="GO:0000287">
    <property type="term" value="F:magnesium ion binding"/>
    <property type="evidence" value="ECO:0007669"/>
    <property type="project" value="UniProtKB-UniRule"/>
</dbReference>
<dbReference type="GO" id="GO:0006261">
    <property type="term" value="P:DNA-templated DNA replication"/>
    <property type="evidence" value="ECO:0007669"/>
    <property type="project" value="UniProtKB-UniRule"/>
</dbReference>
<dbReference type="GO" id="GO:0042276">
    <property type="term" value="P:error-prone translesion synthesis"/>
    <property type="evidence" value="ECO:0007669"/>
    <property type="project" value="TreeGrafter"/>
</dbReference>
<dbReference type="GO" id="GO:0009432">
    <property type="term" value="P:SOS response"/>
    <property type="evidence" value="ECO:0007669"/>
    <property type="project" value="TreeGrafter"/>
</dbReference>
<dbReference type="CDD" id="cd03586">
    <property type="entry name" value="PolY_Pol_IV_kappa"/>
    <property type="match status" value="1"/>
</dbReference>
<dbReference type="FunFam" id="3.30.1490.100:FF:000004">
    <property type="entry name" value="DNA polymerase IV"/>
    <property type="match status" value="1"/>
</dbReference>
<dbReference type="FunFam" id="3.40.1170.60:FF:000001">
    <property type="entry name" value="DNA polymerase IV"/>
    <property type="match status" value="1"/>
</dbReference>
<dbReference type="Gene3D" id="3.30.70.270">
    <property type="match status" value="1"/>
</dbReference>
<dbReference type="Gene3D" id="3.40.1170.60">
    <property type="match status" value="1"/>
</dbReference>
<dbReference type="Gene3D" id="1.10.150.20">
    <property type="entry name" value="5' to 3' exonuclease, C-terminal subdomain"/>
    <property type="match status" value="1"/>
</dbReference>
<dbReference type="Gene3D" id="3.30.1490.100">
    <property type="entry name" value="DNA polymerase, Y-family, little finger domain"/>
    <property type="match status" value="1"/>
</dbReference>
<dbReference type="HAMAP" id="MF_01113">
    <property type="entry name" value="DNApol_IV"/>
    <property type="match status" value="1"/>
</dbReference>
<dbReference type="InterPro" id="IPR043502">
    <property type="entry name" value="DNA/RNA_pol_sf"/>
</dbReference>
<dbReference type="InterPro" id="IPR036775">
    <property type="entry name" value="DNA_pol_Y-fam_lit_finger_sf"/>
</dbReference>
<dbReference type="InterPro" id="IPR017961">
    <property type="entry name" value="DNA_pol_Y-fam_little_finger"/>
</dbReference>
<dbReference type="InterPro" id="IPR050116">
    <property type="entry name" value="DNA_polymerase-Y"/>
</dbReference>
<dbReference type="InterPro" id="IPR022880">
    <property type="entry name" value="DNApol_IV"/>
</dbReference>
<dbReference type="InterPro" id="IPR053848">
    <property type="entry name" value="IMS_HHH_1"/>
</dbReference>
<dbReference type="InterPro" id="IPR043128">
    <property type="entry name" value="Rev_trsase/Diguanyl_cyclase"/>
</dbReference>
<dbReference type="InterPro" id="IPR001126">
    <property type="entry name" value="UmuC"/>
</dbReference>
<dbReference type="NCBIfam" id="NF002677">
    <property type="entry name" value="PRK02406.1"/>
    <property type="match status" value="1"/>
</dbReference>
<dbReference type="PANTHER" id="PTHR11076:SF33">
    <property type="entry name" value="DNA POLYMERASE KAPPA"/>
    <property type="match status" value="1"/>
</dbReference>
<dbReference type="PANTHER" id="PTHR11076">
    <property type="entry name" value="DNA REPAIR POLYMERASE UMUC / TRANSFERASE FAMILY MEMBER"/>
    <property type="match status" value="1"/>
</dbReference>
<dbReference type="Pfam" id="PF00817">
    <property type="entry name" value="IMS"/>
    <property type="match status" value="1"/>
</dbReference>
<dbReference type="Pfam" id="PF11799">
    <property type="entry name" value="IMS_C"/>
    <property type="match status" value="1"/>
</dbReference>
<dbReference type="Pfam" id="PF21999">
    <property type="entry name" value="IMS_HHH_1"/>
    <property type="match status" value="1"/>
</dbReference>
<dbReference type="SUPFAM" id="SSF56672">
    <property type="entry name" value="DNA/RNA polymerases"/>
    <property type="match status" value="1"/>
</dbReference>
<dbReference type="SUPFAM" id="SSF100879">
    <property type="entry name" value="Lesion bypass DNA polymerase (Y-family), little finger domain"/>
    <property type="match status" value="1"/>
</dbReference>
<dbReference type="PROSITE" id="PS50173">
    <property type="entry name" value="UMUC"/>
    <property type="match status" value="1"/>
</dbReference>
<reference key="1">
    <citation type="submission" date="2008-06" db="EMBL/GenBank/DDBJ databases">
        <title>Complete sequence of Stenotrophomonas maltophilia R551-3.</title>
        <authorList>
            <consortium name="US DOE Joint Genome Institute"/>
            <person name="Lucas S."/>
            <person name="Copeland A."/>
            <person name="Lapidus A."/>
            <person name="Glavina del Rio T."/>
            <person name="Dalin E."/>
            <person name="Tice H."/>
            <person name="Pitluck S."/>
            <person name="Chain P."/>
            <person name="Malfatti S."/>
            <person name="Shin M."/>
            <person name="Vergez L."/>
            <person name="Lang D."/>
            <person name="Schmutz J."/>
            <person name="Larimer F."/>
            <person name="Land M."/>
            <person name="Hauser L."/>
            <person name="Kyrpides N."/>
            <person name="Mikhailova N."/>
            <person name="Taghavi S."/>
            <person name="Monchy S."/>
            <person name="Newman L."/>
            <person name="Vangronsveld J."/>
            <person name="van der Lelie D."/>
            <person name="Richardson P."/>
        </authorList>
    </citation>
    <scope>NUCLEOTIDE SEQUENCE [LARGE SCALE GENOMIC DNA]</scope>
    <source>
        <strain>R551-3</strain>
    </source>
</reference>
<accession>B4SIF5</accession>
<keyword id="KW-0963">Cytoplasm</keyword>
<keyword id="KW-0227">DNA damage</keyword>
<keyword id="KW-0234">DNA repair</keyword>
<keyword id="KW-0235">DNA replication</keyword>
<keyword id="KW-0238">DNA-binding</keyword>
<keyword id="KW-0239">DNA-directed DNA polymerase</keyword>
<keyword id="KW-0460">Magnesium</keyword>
<keyword id="KW-0479">Metal-binding</keyword>
<keyword id="KW-0515">Mutator protein</keyword>
<keyword id="KW-0548">Nucleotidyltransferase</keyword>
<keyword id="KW-0808">Transferase</keyword>